<sequence>MQLLIVAVGHKMPSWIEEGFSEYAKRMPPELRIELREIKPEQRSGSRTAATVMQLEAARIEAALPKGCRMIALDERGKDLTTVALAESLTGWQQEGGDIAFVIGGADGLDPALKAKARTLIRLSSLTLPHGMVRVLLAEQLYRAWSITQNHPYHRV</sequence>
<feature type="chain" id="PRO_0000366643" description="Ribosomal RNA large subunit methyltransferase H">
    <location>
        <begin position="1"/>
        <end position="156"/>
    </location>
</feature>
<feature type="binding site" evidence="1">
    <location>
        <position position="73"/>
    </location>
    <ligand>
        <name>S-adenosyl-L-methionine</name>
        <dbReference type="ChEBI" id="CHEBI:59789"/>
    </ligand>
</feature>
<feature type="binding site" evidence="1">
    <location>
        <position position="104"/>
    </location>
    <ligand>
        <name>S-adenosyl-L-methionine</name>
        <dbReference type="ChEBI" id="CHEBI:59789"/>
    </ligand>
</feature>
<feature type="binding site" evidence="1">
    <location>
        <begin position="123"/>
        <end position="128"/>
    </location>
    <ligand>
        <name>S-adenosyl-L-methionine</name>
        <dbReference type="ChEBI" id="CHEBI:59789"/>
    </ligand>
</feature>
<name>RLMH_RALPJ</name>
<gene>
    <name evidence="1" type="primary">rlmH</name>
    <name type="ordered locus">Rpic_2393</name>
</gene>
<organism>
    <name type="scientific">Ralstonia pickettii (strain 12J)</name>
    <dbReference type="NCBI Taxonomy" id="402626"/>
    <lineage>
        <taxon>Bacteria</taxon>
        <taxon>Pseudomonadati</taxon>
        <taxon>Pseudomonadota</taxon>
        <taxon>Betaproteobacteria</taxon>
        <taxon>Burkholderiales</taxon>
        <taxon>Burkholderiaceae</taxon>
        <taxon>Ralstonia</taxon>
    </lineage>
</organism>
<protein>
    <recommendedName>
        <fullName evidence="1">Ribosomal RNA large subunit methyltransferase H</fullName>
        <ecNumber evidence="1">2.1.1.177</ecNumber>
    </recommendedName>
    <alternativeName>
        <fullName evidence="1">23S rRNA (pseudouridine1915-N3)-methyltransferase</fullName>
    </alternativeName>
    <alternativeName>
        <fullName evidence="1">23S rRNA m3Psi1915 methyltransferase</fullName>
    </alternativeName>
    <alternativeName>
        <fullName evidence="1">rRNA (pseudouridine-N3-)-methyltransferase RlmH</fullName>
    </alternativeName>
</protein>
<proteinExistence type="inferred from homology"/>
<evidence type="ECO:0000255" key="1">
    <source>
        <dbReference type="HAMAP-Rule" id="MF_00658"/>
    </source>
</evidence>
<accession>B2U8Z7</accession>
<dbReference type="EC" id="2.1.1.177" evidence="1"/>
<dbReference type="EMBL" id="CP001068">
    <property type="protein sequence ID" value="ACD27527.1"/>
    <property type="molecule type" value="Genomic_DNA"/>
</dbReference>
<dbReference type="SMR" id="B2U8Z7"/>
<dbReference type="STRING" id="402626.Rpic_2393"/>
<dbReference type="KEGG" id="rpi:Rpic_2393"/>
<dbReference type="eggNOG" id="COG1576">
    <property type="taxonomic scope" value="Bacteria"/>
</dbReference>
<dbReference type="HOGENOM" id="CLU_100552_1_0_4"/>
<dbReference type="GO" id="GO:0005737">
    <property type="term" value="C:cytoplasm"/>
    <property type="evidence" value="ECO:0007669"/>
    <property type="project" value="UniProtKB-SubCell"/>
</dbReference>
<dbReference type="GO" id="GO:0070038">
    <property type="term" value="F:rRNA (pseudouridine-N3-)-methyltransferase activity"/>
    <property type="evidence" value="ECO:0007669"/>
    <property type="project" value="UniProtKB-UniRule"/>
</dbReference>
<dbReference type="CDD" id="cd18081">
    <property type="entry name" value="RlmH-like"/>
    <property type="match status" value="1"/>
</dbReference>
<dbReference type="Gene3D" id="3.40.1280.10">
    <property type="match status" value="1"/>
</dbReference>
<dbReference type="HAMAP" id="MF_00658">
    <property type="entry name" value="23SrRNA_methyltr_H"/>
    <property type="match status" value="1"/>
</dbReference>
<dbReference type="InterPro" id="IPR029028">
    <property type="entry name" value="Alpha/beta_knot_MTases"/>
</dbReference>
<dbReference type="InterPro" id="IPR003742">
    <property type="entry name" value="RlmH-like"/>
</dbReference>
<dbReference type="InterPro" id="IPR029026">
    <property type="entry name" value="tRNA_m1G_MTases_N"/>
</dbReference>
<dbReference type="NCBIfam" id="NF000986">
    <property type="entry name" value="PRK00103.1-4"/>
    <property type="match status" value="1"/>
</dbReference>
<dbReference type="NCBIfam" id="TIGR00246">
    <property type="entry name" value="tRNA_RlmH_YbeA"/>
    <property type="match status" value="1"/>
</dbReference>
<dbReference type="PANTHER" id="PTHR33603">
    <property type="entry name" value="METHYLTRANSFERASE"/>
    <property type="match status" value="1"/>
</dbReference>
<dbReference type="PANTHER" id="PTHR33603:SF1">
    <property type="entry name" value="RIBOSOMAL RNA LARGE SUBUNIT METHYLTRANSFERASE H"/>
    <property type="match status" value="1"/>
</dbReference>
<dbReference type="Pfam" id="PF02590">
    <property type="entry name" value="SPOUT_MTase"/>
    <property type="match status" value="1"/>
</dbReference>
<dbReference type="PIRSF" id="PIRSF004505">
    <property type="entry name" value="MT_bac"/>
    <property type="match status" value="1"/>
</dbReference>
<dbReference type="SUPFAM" id="SSF75217">
    <property type="entry name" value="alpha/beta knot"/>
    <property type="match status" value="1"/>
</dbReference>
<comment type="function">
    <text evidence="1">Specifically methylates the pseudouridine at position 1915 (m3Psi1915) in 23S rRNA.</text>
</comment>
<comment type="catalytic activity">
    <reaction evidence="1">
        <text>pseudouridine(1915) in 23S rRNA + S-adenosyl-L-methionine = N(3)-methylpseudouridine(1915) in 23S rRNA + S-adenosyl-L-homocysteine + H(+)</text>
        <dbReference type="Rhea" id="RHEA:42752"/>
        <dbReference type="Rhea" id="RHEA-COMP:10221"/>
        <dbReference type="Rhea" id="RHEA-COMP:10222"/>
        <dbReference type="ChEBI" id="CHEBI:15378"/>
        <dbReference type="ChEBI" id="CHEBI:57856"/>
        <dbReference type="ChEBI" id="CHEBI:59789"/>
        <dbReference type="ChEBI" id="CHEBI:65314"/>
        <dbReference type="ChEBI" id="CHEBI:74486"/>
        <dbReference type="EC" id="2.1.1.177"/>
    </reaction>
</comment>
<comment type="subunit">
    <text evidence="1">Homodimer.</text>
</comment>
<comment type="subcellular location">
    <subcellularLocation>
        <location evidence="1">Cytoplasm</location>
    </subcellularLocation>
</comment>
<comment type="similarity">
    <text evidence="1">Belongs to the RNA methyltransferase RlmH family.</text>
</comment>
<reference key="1">
    <citation type="submission" date="2008-05" db="EMBL/GenBank/DDBJ databases">
        <title>Complete sequence of chromosome 1 of Ralstonia pickettii 12J.</title>
        <authorList>
            <person name="Lucas S."/>
            <person name="Copeland A."/>
            <person name="Lapidus A."/>
            <person name="Glavina del Rio T."/>
            <person name="Dalin E."/>
            <person name="Tice H."/>
            <person name="Bruce D."/>
            <person name="Goodwin L."/>
            <person name="Pitluck S."/>
            <person name="Meincke L."/>
            <person name="Brettin T."/>
            <person name="Detter J.C."/>
            <person name="Han C."/>
            <person name="Kuske C.R."/>
            <person name="Schmutz J."/>
            <person name="Larimer F."/>
            <person name="Land M."/>
            <person name="Hauser L."/>
            <person name="Kyrpides N."/>
            <person name="Mikhailova N."/>
            <person name="Marsh T."/>
            <person name="Richardson P."/>
        </authorList>
    </citation>
    <scope>NUCLEOTIDE SEQUENCE [LARGE SCALE GENOMIC DNA]</scope>
    <source>
        <strain>12J</strain>
    </source>
</reference>
<keyword id="KW-0963">Cytoplasm</keyword>
<keyword id="KW-0489">Methyltransferase</keyword>
<keyword id="KW-0698">rRNA processing</keyword>
<keyword id="KW-0949">S-adenosyl-L-methionine</keyword>
<keyword id="KW-0808">Transferase</keyword>